<dbReference type="EC" id="6.1.1.16" evidence="1"/>
<dbReference type="EMBL" id="CR767821">
    <property type="protein sequence ID" value="CAH58045.1"/>
    <property type="molecule type" value="Genomic_DNA"/>
</dbReference>
<dbReference type="EMBL" id="CR925678">
    <property type="protein sequence ID" value="CAI26826.1"/>
    <property type="molecule type" value="Genomic_DNA"/>
</dbReference>
<dbReference type="RefSeq" id="WP_011155006.1">
    <property type="nucleotide sequence ID" value="NC_005295.2"/>
</dbReference>
<dbReference type="SMR" id="Q5HBK5"/>
<dbReference type="GeneID" id="33057775"/>
<dbReference type="KEGG" id="eru:Erum3250"/>
<dbReference type="KEGG" id="erw:ERWE_CDS_03320"/>
<dbReference type="eggNOG" id="COG0215">
    <property type="taxonomic scope" value="Bacteria"/>
</dbReference>
<dbReference type="HOGENOM" id="CLU_013528_0_1_5"/>
<dbReference type="Proteomes" id="UP000001021">
    <property type="component" value="Chromosome"/>
</dbReference>
<dbReference type="GO" id="GO:0005829">
    <property type="term" value="C:cytosol"/>
    <property type="evidence" value="ECO:0007669"/>
    <property type="project" value="TreeGrafter"/>
</dbReference>
<dbReference type="GO" id="GO:0005524">
    <property type="term" value="F:ATP binding"/>
    <property type="evidence" value="ECO:0007669"/>
    <property type="project" value="UniProtKB-UniRule"/>
</dbReference>
<dbReference type="GO" id="GO:0004817">
    <property type="term" value="F:cysteine-tRNA ligase activity"/>
    <property type="evidence" value="ECO:0007669"/>
    <property type="project" value="UniProtKB-UniRule"/>
</dbReference>
<dbReference type="GO" id="GO:0008270">
    <property type="term" value="F:zinc ion binding"/>
    <property type="evidence" value="ECO:0007669"/>
    <property type="project" value="UniProtKB-UniRule"/>
</dbReference>
<dbReference type="GO" id="GO:0006423">
    <property type="term" value="P:cysteinyl-tRNA aminoacylation"/>
    <property type="evidence" value="ECO:0007669"/>
    <property type="project" value="UniProtKB-UniRule"/>
</dbReference>
<dbReference type="CDD" id="cd00672">
    <property type="entry name" value="CysRS_core"/>
    <property type="match status" value="1"/>
</dbReference>
<dbReference type="Gene3D" id="1.20.120.1910">
    <property type="entry name" value="Cysteine-tRNA ligase, C-terminal anti-codon recognition domain"/>
    <property type="match status" value="1"/>
</dbReference>
<dbReference type="Gene3D" id="3.40.50.620">
    <property type="entry name" value="HUPs"/>
    <property type="match status" value="1"/>
</dbReference>
<dbReference type="HAMAP" id="MF_00041">
    <property type="entry name" value="Cys_tRNA_synth"/>
    <property type="match status" value="1"/>
</dbReference>
<dbReference type="InterPro" id="IPR015803">
    <property type="entry name" value="Cys-tRNA-ligase"/>
</dbReference>
<dbReference type="InterPro" id="IPR015273">
    <property type="entry name" value="Cys-tRNA-synt_Ia_DALR"/>
</dbReference>
<dbReference type="InterPro" id="IPR024909">
    <property type="entry name" value="Cys-tRNA/MSH_ligase"/>
</dbReference>
<dbReference type="InterPro" id="IPR014729">
    <property type="entry name" value="Rossmann-like_a/b/a_fold"/>
</dbReference>
<dbReference type="InterPro" id="IPR032678">
    <property type="entry name" value="tRNA-synt_1_cat_dom"/>
</dbReference>
<dbReference type="InterPro" id="IPR009080">
    <property type="entry name" value="tRNAsynth_Ia_anticodon-bd"/>
</dbReference>
<dbReference type="NCBIfam" id="TIGR00435">
    <property type="entry name" value="cysS"/>
    <property type="match status" value="1"/>
</dbReference>
<dbReference type="PANTHER" id="PTHR10890:SF3">
    <property type="entry name" value="CYSTEINE--TRNA LIGASE, CYTOPLASMIC"/>
    <property type="match status" value="1"/>
</dbReference>
<dbReference type="PANTHER" id="PTHR10890">
    <property type="entry name" value="CYSTEINYL-TRNA SYNTHETASE"/>
    <property type="match status" value="1"/>
</dbReference>
<dbReference type="Pfam" id="PF09190">
    <property type="entry name" value="DALR_2"/>
    <property type="match status" value="1"/>
</dbReference>
<dbReference type="Pfam" id="PF01406">
    <property type="entry name" value="tRNA-synt_1e"/>
    <property type="match status" value="1"/>
</dbReference>
<dbReference type="PRINTS" id="PR00983">
    <property type="entry name" value="TRNASYNTHCYS"/>
</dbReference>
<dbReference type="SMART" id="SM00840">
    <property type="entry name" value="DALR_2"/>
    <property type="match status" value="1"/>
</dbReference>
<dbReference type="SUPFAM" id="SSF47323">
    <property type="entry name" value="Anticodon-binding domain of a subclass of class I aminoacyl-tRNA synthetases"/>
    <property type="match status" value="1"/>
</dbReference>
<dbReference type="SUPFAM" id="SSF52374">
    <property type="entry name" value="Nucleotidylyl transferase"/>
    <property type="match status" value="1"/>
</dbReference>
<organism>
    <name type="scientific">Ehrlichia ruminantium (strain Welgevonden)</name>
    <dbReference type="NCBI Taxonomy" id="254945"/>
    <lineage>
        <taxon>Bacteria</taxon>
        <taxon>Pseudomonadati</taxon>
        <taxon>Pseudomonadota</taxon>
        <taxon>Alphaproteobacteria</taxon>
        <taxon>Rickettsiales</taxon>
        <taxon>Anaplasmataceae</taxon>
        <taxon>Ehrlichia</taxon>
    </lineage>
</organism>
<proteinExistence type="inferred from homology"/>
<name>SYC_EHRRW</name>
<sequence length="457" mass="52817">MIIYNTLTRSKELFVPLDVNNVKIYVCGPTVYDFAHIGNSRSIVIYDILFRLLNVLYPKVTYIRNITDIDDKIINVAQNNNQNIYDVTARYIKAFNEDMGRLNCLKPTYEPRATENIDVMLALIEKLINYGHAYICDNTVFFDIESYPAYGKLSGRNIMELIYGSRIDIEVGKKHPGDFVLWKPATDIDNKLMSCWPSPWGVGRPGWHIECSAMSYNYLGENFDIHGGGADLQFPHHENELAQSCCAFPNSYYAKYWIHNGFLTVNHEKMSKSLGNFLTVRQLLDSGIRGEVIRYIFLSTHYRKPLDWNDNVVSNAQESLNRIYMALNVTDERLLLDDVEVSDEIISCLKDDMNTPKAIAVLHEMVTRINKASDIDKKVYFIKVLIKSANFLGILYHSWQEWFKVDNDQDIIQLIHERKMAKTNGDFRKADRIRQILLDKGIVLSDNKDGTTLWYRS</sequence>
<feature type="chain" id="PRO_0000240913" description="Cysteine--tRNA ligase">
    <location>
        <begin position="1"/>
        <end position="457"/>
    </location>
</feature>
<feature type="short sequence motif" description="'HIGH' region">
    <location>
        <begin position="29"/>
        <end position="39"/>
    </location>
</feature>
<feature type="short sequence motif" description="'KMSKS' region">
    <location>
        <begin position="269"/>
        <end position="273"/>
    </location>
</feature>
<feature type="binding site" evidence="1">
    <location>
        <position position="27"/>
    </location>
    <ligand>
        <name>Zn(2+)</name>
        <dbReference type="ChEBI" id="CHEBI:29105"/>
    </ligand>
</feature>
<feature type="binding site" evidence="1">
    <location>
        <position position="211"/>
    </location>
    <ligand>
        <name>Zn(2+)</name>
        <dbReference type="ChEBI" id="CHEBI:29105"/>
    </ligand>
</feature>
<feature type="binding site" evidence="1">
    <location>
        <position position="236"/>
    </location>
    <ligand>
        <name>Zn(2+)</name>
        <dbReference type="ChEBI" id="CHEBI:29105"/>
    </ligand>
</feature>
<feature type="binding site" evidence="1">
    <location>
        <position position="240"/>
    </location>
    <ligand>
        <name>Zn(2+)</name>
        <dbReference type="ChEBI" id="CHEBI:29105"/>
    </ligand>
</feature>
<feature type="binding site" evidence="1">
    <location>
        <position position="272"/>
    </location>
    <ligand>
        <name>ATP</name>
        <dbReference type="ChEBI" id="CHEBI:30616"/>
    </ligand>
</feature>
<comment type="catalytic activity">
    <reaction evidence="1">
        <text>tRNA(Cys) + L-cysteine + ATP = L-cysteinyl-tRNA(Cys) + AMP + diphosphate</text>
        <dbReference type="Rhea" id="RHEA:17773"/>
        <dbReference type="Rhea" id="RHEA-COMP:9661"/>
        <dbReference type="Rhea" id="RHEA-COMP:9679"/>
        <dbReference type="ChEBI" id="CHEBI:30616"/>
        <dbReference type="ChEBI" id="CHEBI:33019"/>
        <dbReference type="ChEBI" id="CHEBI:35235"/>
        <dbReference type="ChEBI" id="CHEBI:78442"/>
        <dbReference type="ChEBI" id="CHEBI:78517"/>
        <dbReference type="ChEBI" id="CHEBI:456215"/>
        <dbReference type="EC" id="6.1.1.16"/>
    </reaction>
</comment>
<comment type="cofactor">
    <cofactor evidence="1">
        <name>Zn(2+)</name>
        <dbReference type="ChEBI" id="CHEBI:29105"/>
    </cofactor>
    <text evidence="1">Binds 1 zinc ion per subunit.</text>
</comment>
<comment type="subunit">
    <text evidence="1">Monomer.</text>
</comment>
<comment type="subcellular location">
    <subcellularLocation>
        <location evidence="1">Cytoplasm</location>
    </subcellularLocation>
</comment>
<comment type="similarity">
    <text evidence="1">Belongs to the class-I aminoacyl-tRNA synthetase family.</text>
</comment>
<reference key="1">
    <citation type="journal article" date="2005" name="Proc. Natl. Acad. Sci. U.S.A.">
        <title>The genome of the heartwater agent Ehrlichia ruminantium contains multiple tandem repeats of actively variable copy number.</title>
        <authorList>
            <person name="Collins N.E."/>
            <person name="Liebenberg J."/>
            <person name="de Villiers E.P."/>
            <person name="Brayton K.A."/>
            <person name="Louw E."/>
            <person name="Pretorius A."/>
            <person name="Faber F.E."/>
            <person name="van Heerden H."/>
            <person name="Josemans A."/>
            <person name="van Kleef M."/>
            <person name="Steyn H.C."/>
            <person name="van Strijp M.F."/>
            <person name="Zweygarth E."/>
            <person name="Jongejan F."/>
            <person name="Maillard J.C."/>
            <person name="Berthier D."/>
            <person name="Botha M."/>
            <person name="Joubert F."/>
            <person name="Corton C.H."/>
            <person name="Thomson N.R."/>
            <person name="Allsopp M.T."/>
            <person name="Allsopp B.A."/>
        </authorList>
    </citation>
    <scope>NUCLEOTIDE SEQUENCE [LARGE SCALE GENOMIC DNA]</scope>
    <source>
        <strain>Welgevonden</strain>
    </source>
</reference>
<reference key="2">
    <citation type="journal article" date="2006" name="J. Bacteriol.">
        <title>Comparative genomic analysis of three strains of Ehrlichia ruminantium reveals an active process of genome size plasticity.</title>
        <authorList>
            <person name="Frutos R."/>
            <person name="Viari A."/>
            <person name="Ferraz C."/>
            <person name="Morgat A."/>
            <person name="Eychenie S."/>
            <person name="Kandassamy Y."/>
            <person name="Chantal I."/>
            <person name="Bensaid A."/>
            <person name="Coissac E."/>
            <person name="Vachiery N."/>
            <person name="Demaille J."/>
            <person name="Martinez D."/>
        </authorList>
    </citation>
    <scope>NUCLEOTIDE SEQUENCE [LARGE SCALE GENOMIC DNA]</scope>
    <source>
        <strain>Welgevonden</strain>
    </source>
</reference>
<evidence type="ECO:0000255" key="1">
    <source>
        <dbReference type="HAMAP-Rule" id="MF_00041"/>
    </source>
</evidence>
<protein>
    <recommendedName>
        <fullName evidence="1">Cysteine--tRNA ligase</fullName>
        <ecNumber evidence="1">6.1.1.16</ecNumber>
    </recommendedName>
    <alternativeName>
        <fullName evidence="1">Cysteinyl-tRNA synthetase</fullName>
        <shortName evidence="1">CysRS</shortName>
    </alternativeName>
</protein>
<accession>Q5HBK5</accession>
<accession>Q5FEC1</accession>
<keyword id="KW-0030">Aminoacyl-tRNA synthetase</keyword>
<keyword id="KW-0067">ATP-binding</keyword>
<keyword id="KW-0963">Cytoplasm</keyword>
<keyword id="KW-0436">Ligase</keyword>
<keyword id="KW-0479">Metal-binding</keyword>
<keyword id="KW-0547">Nucleotide-binding</keyword>
<keyword id="KW-0648">Protein biosynthesis</keyword>
<keyword id="KW-0862">Zinc</keyword>
<gene>
    <name evidence="1" type="primary">cysS</name>
    <name type="ordered locus">Erum3250</name>
    <name type="ordered locus">ERWE_CDS_03320</name>
</gene>